<reference key="1">
    <citation type="journal article" date="1990" name="Virology">
        <title>Structure of the gene encoding the M1 protein of sonchus yellow net virus.</title>
        <authorList>
            <person name="Hillman B.I."/>
            <person name="Heaton L.A."/>
            <person name="Hunter B.G."/>
            <person name="Modrell B."/>
            <person name="Jackson A.O."/>
        </authorList>
    </citation>
    <scope>NUCLEOTIDE SEQUENCE [MRNA]</scope>
    <source>
        <strain>ATCC PV-263</strain>
    </source>
</reference>
<gene>
    <name type="primary">P</name>
</gene>
<protein>
    <recommendedName>
        <fullName>Phosphoprotein</fullName>
        <shortName>Protein P</shortName>
    </recommendedName>
    <alternativeName>
        <fullName>Protein M1</fullName>
    </alternativeName>
</protein>
<feature type="chain" id="PRO_0000222833" description="Phosphoprotein">
    <location>
        <begin position="1"/>
        <end position="286"/>
    </location>
</feature>
<feature type="region of interest" description="Disordered" evidence="1">
    <location>
        <begin position="187"/>
        <end position="234"/>
    </location>
</feature>
<feature type="region of interest" description="Disordered" evidence="1">
    <location>
        <begin position="257"/>
        <end position="286"/>
    </location>
</feature>
<feature type="compositionally biased region" description="Basic and acidic residues" evidence="1">
    <location>
        <begin position="211"/>
        <end position="225"/>
    </location>
</feature>
<sequence length="286" mass="31775">MAGIYAVSIKGHASAIFNRQEKEISTGRVWEVMKKIMSLKPTRVIMSYSLLRSALDKSRQLTQEEYNIMQLILDGCVKTLEPVAASGICIDVNLGKCTKHTIPFGITNNDVGHVSVVMTLPFLEEGCYNIGACFDGRLSKSRSDASHYAVDVSLEIYLKSLSRDEAEEQISKGTSVYPFKINHPTYFEDETDTSDGESLSGRASSDDGPEDGGHGHGDKNNEKNSGKVVRKRKSRKEIDVGRFKMVKDNIINTRSGLLKSMRGTGHRKHRTQEITEGYNYGDKDAE</sequence>
<keyword id="KW-0597">Phosphoprotein</keyword>
<keyword id="KW-1185">Reference proteome</keyword>
<organismHost>
    <name type="scientific">Aphis</name>
    <dbReference type="NCBI Taxonomy" id="80764"/>
</organismHost>
<organismHost>
    <name type="scientific">Bidens pilosa</name>
    <name type="common">Hairy beggarticks</name>
    <name type="synonym">Cobbler's pegs</name>
    <dbReference type="NCBI Taxonomy" id="42337"/>
</organismHost>
<organismHost>
    <name type="scientific">Lactuca sativa</name>
    <name type="common">Garden lettuce</name>
    <dbReference type="NCBI Taxonomy" id="4236"/>
</organismHost>
<organismHost>
    <name type="scientific">Sonchus oleraceus</name>
    <name type="common">Common sowthistle</name>
    <dbReference type="NCBI Taxonomy" id="50207"/>
</organismHost>
<name>PHOSP_SYNV</name>
<evidence type="ECO:0000256" key="1">
    <source>
        <dbReference type="SAM" id="MobiDB-lite"/>
    </source>
</evidence>
<comment type="function">
    <text>This protein is probably a component of the active polymerase. It may function in template binding.</text>
</comment>
<dbReference type="EMBL" id="L32603">
    <property type="protein sequence ID" value="AAA50383.1"/>
    <property type="molecule type" value="mRNA"/>
</dbReference>
<dbReference type="EMBL" id="M35689">
    <property type="protein sequence ID" value="AAA47897.1"/>
    <property type="molecule type" value="Genomic_RNA"/>
</dbReference>
<dbReference type="PIR" id="A45350">
    <property type="entry name" value="A45350"/>
</dbReference>
<dbReference type="KEGG" id="vg:1489880"/>
<dbReference type="OrthoDB" id="36518at10239"/>
<dbReference type="Proteomes" id="UP000002326">
    <property type="component" value="Genome"/>
</dbReference>
<proteinExistence type="evidence at transcript level"/>
<organism>
    <name type="scientific">Sonchus yellow net virus</name>
    <name type="common">SYNV</name>
    <dbReference type="NCBI Taxonomy" id="11307"/>
    <lineage>
        <taxon>Viruses</taxon>
        <taxon>Riboviria</taxon>
        <taxon>Orthornavirae</taxon>
        <taxon>Negarnaviricota</taxon>
        <taxon>Haploviricotina</taxon>
        <taxon>Monjiviricetes</taxon>
        <taxon>Mononegavirales</taxon>
        <taxon>Rhabdoviridae</taxon>
        <taxon>Betarhabdovirinae</taxon>
        <taxon>Betanucleorhabdovirus</taxon>
        <taxon>Betanucleorhabdovirus retesonchi</taxon>
    </lineage>
</organism>
<accession>P21299</accession>